<feature type="chain" id="PRO_0000446882" description="PTS system cellobiose-specific EIIC component">
    <location>
        <begin position="1"/>
        <end position="494"/>
    </location>
</feature>
<feature type="transmembrane region" description="Helical" evidence="2">
    <location>
        <begin position="32"/>
        <end position="52"/>
    </location>
</feature>
<feature type="transmembrane region" description="Helical" evidence="2">
    <location>
        <begin position="92"/>
        <end position="112"/>
    </location>
</feature>
<feature type="transmembrane region" description="Helical" evidence="2">
    <location>
        <begin position="119"/>
        <end position="139"/>
    </location>
</feature>
<feature type="transmembrane region" description="Helical" evidence="2">
    <location>
        <begin position="188"/>
        <end position="208"/>
    </location>
</feature>
<feature type="transmembrane region" description="Helical" evidence="2">
    <location>
        <begin position="227"/>
        <end position="247"/>
    </location>
</feature>
<feature type="transmembrane region" description="Helical" evidence="2">
    <location>
        <begin position="274"/>
        <end position="294"/>
    </location>
</feature>
<feature type="transmembrane region" description="Helical" evidence="2">
    <location>
        <begin position="355"/>
        <end position="375"/>
    </location>
</feature>
<feature type="transmembrane region" description="Helical" evidence="2">
    <location>
        <begin position="406"/>
        <end position="426"/>
    </location>
</feature>
<feature type="transmembrane region" description="Helical" evidence="2">
    <location>
        <begin position="463"/>
        <end position="483"/>
    </location>
</feature>
<feature type="domain" description="PTS EIIC type-3" evidence="2">
    <location>
        <begin position="8"/>
        <end position="481"/>
    </location>
</feature>
<comment type="function">
    <text evidence="1 3 4">The phosphoenolpyruvate-dependent sugar phosphotransferase system (PTS), a major carbohydrate active transport system, catalyzes the phosphorylation of incoming sugar substrates concomitant with their translocation across the cell membrane (By similarity). Involved in cellobiose transport with PtcA and PtcB. This system can also transport lactose (PubMed:17909747, PubMed:21262549).</text>
</comment>
<comment type="subcellular location">
    <subcellularLocation>
        <location evidence="2">Cell membrane</location>
        <topology evidence="2">Multi-pass membrane protein</topology>
    </subcellularLocation>
</comment>
<comment type="induction">
    <text evidence="3 4">Induced by growth on cellobiose. Negativelly controlled by the CcpA regulator.</text>
</comment>
<comment type="domain">
    <text evidence="2">The EIIC type-3 domain forms the PTS system translocation channel and contains the specific substrate-binding site.</text>
</comment>
<comment type="disruption phenotype">
    <text evidence="4">Disruption of the gene abolishes growth on cellobiose and lactose.</text>
</comment>
<protein>
    <recommendedName>
        <fullName evidence="6">PTS system cellobiose-specific EIIC component</fullName>
    </recommendedName>
</protein>
<sequence length="494" mass="52780">MNGITAWMEKYLVPVAAKIGSQKHLVALRDSFIGMLPATLAGALAAMISAIVTTFPSAIQQMMLGATAFSKLAPEKVWTLANTPIIGDLNNISALVNQGTLTVIGLIFAFSWGYNLARAYGVNDLAGGIVSLATLFAGLPNQMGKFTAALGTGKAGVAATDKLNGVLGDQGLAAWKPLFASAHLDAGAYFTVIIMGALAVIIYAKLMLADITIKMPESVPPAVAKAFLAIIPTIAALYIVGLIYYIIGKLTNDSVINLITHYIAEPFQILSQNIFSVLIVTLFVSVFWFFGLHGPNVLAPVLDGIWGPLGLNNQALYFQVHSQGIRDLIAKGAVDKAHAINGDYVNLWVRGSWDAFAWFGGSGGTITLVIAIILFSKRKDYKIVGRLGLAPGIFNINEPVLFGLPVVLNAIFFIPFAVAPLISVIIAYTATALHLVDPVVNAVPWVTPPIMNAFMATGFDWRAIVLTIINLIITFVIWVPFVIAANKLEETELD</sequence>
<keyword id="KW-1003">Cell membrane</keyword>
<keyword id="KW-0472">Membrane</keyword>
<keyword id="KW-0598">Phosphotransferase system</keyword>
<keyword id="KW-1185">Reference proteome</keyword>
<keyword id="KW-0762">Sugar transport</keyword>
<keyword id="KW-0808">Transferase</keyword>
<keyword id="KW-0812">Transmembrane</keyword>
<keyword id="KW-1133">Transmembrane helix</keyword>
<keyword id="KW-0813">Transport</keyword>
<proteinExistence type="evidence at transcript level"/>
<evidence type="ECO:0000250" key="1">
    <source>
        <dbReference type="UniProtKB" id="P17334"/>
    </source>
</evidence>
<evidence type="ECO:0000255" key="2">
    <source>
        <dbReference type="PROSITE-ProRule" id="PRU00428"/>
    </source>
</evidence>
<evidence type="ECO:0000269" key="3">
    <source>
    </source>
</evidence>
<evidence type="ECO:0000269" key="4">
    <source>
    </source>
</evidence>
<evidence type="ECO:0000303" key="5">
    <source>
    </source>
</evidence>
<evidence type="ECO:0000305" key="6"/>
<evidence type="ECO:0000312" key="7">
    <source>
        <dbReference type="EMBL" id="AAK04272.1"/>
    </source>
</evidence>
<gene>
    <name evidence="5" type="primary">celB</name>
    <name evidence="6" type="ordered locus">LL0174</name>
    <name evidence="7" type="ORF">L177520</name>
</gene>
<organism>
    <name type="scientific">Lactococcus lactis subsp. lactis (strain IL1403)</name>
    <name type="common">Streptococcus lactis</name>
    <dbReference type="NCBI Taxonomy" id="272623"/>
    <lineage>
        <taxon>Bacteria</taxon>
        <taxon>Bacillati</taxon>
        <taxon>Bacillota</taxon>
        <taxon>Bacilli</taxon>
        <taxon>Lactobacillales</taxon>
        <taxon>Streptococcaceae</taxon>
        <taxon>Lactococcus</taxon>
    </lineage>
</organism>
<name>CELB_LACLA</name>
<reference key="1">
    <citation type="journal article" date="2001" name="Genome Res.">
        <title>The complete genome sequence of the lactic acid bacterium Lactococcus lactis ssp. lactis IL1403.</title>
        <authorList>
            <person name="Bolotin A."/>
            <person name="Wincker P."/>
            <person name="Mauger S."/>
            <person name="Jaillon O."/>
            <person name="Malarme K."/>
            <person name="Weissenbach J."/>
            <person name="Ehrlich S.D."/>
            <person name="Sorokin A."/>
        </authorList>
    </citation>
    <scope>NUCLEOTIDE SEQUENCE [LARGE SCALE GENOMIC DNA]</scope>
    <source>
        <strain>IL1403</strain>
    </source>
</reference>
<reference key="2">
    <citation type="journal article" date="2008" name="Arch. Microbiol.">
        <title>Identification and functional characterisation of cellobiose and lactose transport systems in Lactococcus lactis IL1403.</title>
        <authorList>
            <person name="Kowalczyk M."/>
            <person name="Cocaign-Bousquet M."/>
            <person name="Loubiere P."/>
            <person name="Bardowski J."/>
        </authorList>
    </citation>
    <scope>FUNCTION</scope>
    <scope>INDUCTION</scope>
    <source>
        <strain>IL1403</strain>
    </source>
</reference>
<reference key="3">
    <citation type="journal article" date="2011" name="Int. J. Food Microbiol.">
        <title>Genetic characterization of the CcpA-dependent, cellobiose-specific PTS system comprising CelB, PtcB and PtcA that transports lactose in Lactococcus lactis IL1403.</title>
        <authorList>
            <person name="Aleksandrzak-Piekarczyk T."/>
            <person name="Polak J."/>
            <person name="Jezierska B."/>
            <person name="Renault P."/>
            <person name="Bardowski J."/>
        </authorList>
    </citation>
    <scope>FUNCTION</scope>
    <scope>INDUCTION</scope>
    <scope>DISRUPTION PHENOTYPE</scope>
    <source>
        <strain>IL1403</strain>
    </source>
</reference>
<accession>Q9CJ32</accession>
<dbReference type="EMBL" id="AE005176">
    <property type="protein sequence ID" value="AAK04272.1"/>
    <property type="molecule type" value="Genomic_DNA"/>
</dbReference>
<dbReference type="PIR" id="F86646">
    <property type="entry name" value="F86646"/>
</dbReference>
<dbReference type="RefSeq" id="NP_266330.1">
    <property type="nucleotide sequence ID" value="NC_002662.1"/>
</dbReference>
<dbReference type="RefSeq" id="WP_010905173.1">
    <property type="nucleotide sequence ID" value="NC_002662.1"/>
</dbReference>
<dbReference type="SMR" id="Q9CJ32"/>
<dbReference type="TCDB" id="4.A.3.2.4">
    <property type="family name" value="the pts lactose-n,n'-diacetylchitobiose-Beta-glucoside (lac) family"/>
</dbReference>
<dbReference type="PaxDb" id="272623-L177520"/>
<dbReference type="EnsemblBacteria" id="AAK04272">
    <property type="protein sequence ID" value="AAK04272"/>
    <property type="gene ID" value="L177520"/>
</dbReference>
<dbReference type="KEGG" id="lla:L177520"/>
<dbReference type="PATRIC" id="fig|272623.7.peg.194"/>
<dbReference type="eggNOG" id="COG1455">
    <property type="taxonomic scope" value="Bacteria"/>
</dbReference>
<dbReference type="HOGENOM" id="CLU_029688_1_2_9"/>
<dbReference type="OrthoDB" id="1550290at2"/>
<dbReference type="Proteomes" id="UP000002196">
    <property type="component" value="Chromosome"/>
</dbReference>
<dbReference type="GO" id="GO:0005886">
    <property type="term" value="C:plasma membrane"/>
    <property type="evidence" value="ECO:0007669"/>
    <property type="project" value="UniProtKB-SubCell"/>
</dbReference>
<dbReference type="GO" id="GO:0008982">
    <property type="term" value="F:protein-N(PI)-phosphohistidine-sugar phosphotransferase activity"/>
    <property type="evidence" value="ECO:0007669"/>
    <property type="project" value="InterPro"/>
</dbReference>
<dbReference type="GO" id="GO:1902815">
    <property type="term" value="P:N,N'-diacetylchitobiose import"/>
    <property type="evidence" value="ECO:0007669"/>
    <property type="project" value="TreeGrafter"/>
</dbReference>
<dbReference type="GO" id="GO:0009401">
    <property type="term" value="P:phosphoenolpyruvate-dependent sugar phosphotransferase system"/>
    <property type="evidence" value="ECO:0007669"/>
    <property type="project" value="UniProtKB-KW"/>
</dbReference>
<dbReference type="InterPro" id="IPR003352">
    <property type="entry name" value="PTS_EIIC"/>
</dbReference>
<dbReference type="InterPro" id="IPR004501">
    <property type="entry name" value="PTS_EIIC_3"/>
</dbReference>
<dbReference type="InterPro" id="IPR051088">
    <property type="entry name" value="PTS_Sugar-EIIC/EIIB"/>
</dbReference>
<dbReference type="NCBIfam" id="TIGR00410">
    <property type="entry name" value="lacE"/>
    <property type="match status" value="1"/>
</dbReference>
<dbReference type="PANTHER" id="PTHR33989">
    <property type="match status" value="1"/>
</dbReference>
<dbReference type="PANTHER" id="PTHR33989:SF4">
    <property type="entry name" value="PTS SYSTEM N,N'-DIACETYLCHITOBIOSE-SPECIFIC EIIC COMPONENT"/>
    <property type="match status" value="1"/>
</dbReference>
<dbReference type="Pfam" id="PF02378">
    <property type="entry name" value="PTS_EIIC"/>
    <property type="match status" value="1"/>
</dbReference>
<dbReference type="PROSITE" id="PS51105">
    <property type="entry name" value="PTS_EIIC_TYPE_3"/>
    <property type="match status" value="1"/>
</dbReference>